<gene>
    <name type="primary">YGP1</name>
    <name type="ordered locus">YNL160W</name>
    <name type="ORF">N1731</name>
</gene>
<accession>P38616</accession>
<accession>D6W123</accession>
<evidence type="ECO:0000255" key="1"/>
<evidence type="ECO:0000255" key="2">
    <source>
        <dbReference type="PROSITE-ProRule" id="PRU01068"/>
    </source>
</evidence>
<evidence type="ECO:0000269" key="3">
    <source>
    </source>
</evidence>
<evidence type="ECO:0000269" key="4">
    <source>
    </source>
</evidence>
<evidence type="ECO:0000269" key="5">
    <source>
    </source>
</evidence>
<evidence type="ECO:0000305" key="6"/>
<protein>
    <recommendedName>
        <fullName>Protein YGP1</fullName>
    </recommendedName>
    <alternativeName>
        <fullName>GP38</fullName>
    </alternativeName>
</protein>
<organism>
    <name type="scientific">Saccharomyces cerevisiae (strain ATCC 204508 / S288c)</name>
    <name type="common">Baker's yeast</name>
    <dbReference type="NCBI Taxonomy" id="559292"/>
    <lineage>
        <taxon>Eukaryota</taxon>
        <taxon>Fungi</taxon>
        <taxon>Dikarya</taxon>
        <taxon>Ascomycota</taxon>
        <taxon>Saccharomycotina</taxon>
        <taxon>Saccharomycetes</taxon>
        <taxon>Saccharomycetales</taxon>
        <taxon>Saccharomycetaceae</taxon>
        <taxon>Saccharomyces</taxon>
    </lineage>
</organism>
<proteinExistence type="evidence at protein level"/>
<name>YGP1_YEAST</name>
<feature type="signal peptide" evidence="1">
    <location>
        <begin position="1"/>
        <end position="19"/>
    </location>
</feature>
<feature type="propeptide" id="PRO_0000022705" evidence="5">
    <location>
        <begin position="20"/>
        <end position="37"/>
    </location>
</feature>
<feature type="chain" id="PRO_0000022706" description="Protein YGP1">
    <location>
        <begin position="38"/>
        <end position="354"/>
    </location>
</feature>
<feature type="domain" description="Asparaginase/glutaminase" evidence="2">
    <location>
        <begin position="50"/>
        <end position="354"/>
    </location>
</feature>
<feature type="glycosylation site" description="N-linked (GlcNAc...) asparagine" evidence="1">
    <location>
        <position position="40"/>
    </location>
</feature>
<feature type="glycosylation site" description="N-linked (GlcNAc...) asparagine" evidence="1">
    <location>
        <position position="50"/>
    </location>
</feature>
<feature type="glycosylation site" description="N-linked (GlcNAc...) asparagine" evidence="1">
    <location>
        <position position="53"/>
    </location>
</feature>
<feature type="glycosylation site" description="N-linked (GlcNAc...) asparagine" evidence="1">
    <location>
        <position position="58"/>
    </location>
</feature>
<feature type="glycosylation site" description="N-linked (GlcNAc...) asparagine" evidence="1">
    <location>
        <position position="61"/>
    </location>
</feature>
<feature type="glycosylation site" description="N-linked (GlcNAc...) asparagine" evidence="1">
    <location>
        <position position="65"/>
    </location>
</feature>
<feature type="glycosylation site" description="N-linked (GlcNAc...) asparagine" evidence="1">
    <location>
        <position position="87"/>
    </location>
</feature>
<feature type="glycosylation site" description="N-linked (GlcNAc...) asparagine" evidence="1">
    <location>
        <position position="94"/>
    </location>
</feature>
<feature type="glycosylation site" description="N-linked (GlcNAc...) asparagine" evidence="1">
    <location>
        <position position="100"/>
    </location>
</feature>
<feature type="glycosylation site" description="N-linked (GlcNAc...) asparagine" evidence="1">
    <location>
        <position position="106"/>
    </location>
</feature>
<feature type="glycosylation site" description="N-linked (GlcNAc...) asparagine" evidence="1">
    <location>
        <position position="118"/>
    </location>
</feature>
<feature type="glycosylation site" description="N-linked (GlcNAc...) asparagine" evidence="1">
    <location>
        <position position="172"/>
    </location>
</feature>
<feature type="glycosylation site" description="N-linked (GlcNAc...) asparagine" evidence="1">
    <location>
        <position position="239"/>
    </location>
</feature>
<feature type="glycosylation site" description="N-linked (GlcNAc...) asparagine" evidence="1">
    <location>
        <position position="286"/>
    </location>
</feature>
<feature type="sequence conflict" description="In Ref. 1; CAA51513." evidence="6" ref="1">
    <original>N</original>
    <variation>D</variation>
    <location>
        <position position="47"/>
    </location>
</feature>
<feature type="sequence conflict" description="In Ref. 1; CAA51513." evidence="6" ref="1">
    <original>T</original>
    <variation>R</variation>
    <location>
        <position position="79"/>
    </location>
</feature>
<keyword id="KW-0903">Direct protein sequencing</keyword>
<keyword id="KW-0325">Glycoprotein</keyword>
<keyword id="KW-1185">Reference proteome</keyword>
<keyword id="KW-0964">Secreted</keyword>
<keyword id="KW-0732">Signal</keyword>
<dbReference type="EMBL" id="X73030">
    <property type="protein sequence ID" value="CAA51513.1"/>
    <property type="molecule type" value="Genomic_DNA"/>
</dbReference>
<dbReference type="EMBL" id="X92517">
    <property type="protein sequence ID" value="CAA63279.1"/>
    <property type="molecule type" value="Genomic_DNA"/>
</dbReference>
<dbReference type="EMBL" id="Z71436">
    <property type="protein sequence ID" value="CAA96047.1"/>
    <property type="molecule type" value="Genomic_DNA"/>
</dbReference>
<dbReference type="EMBL" id="BK006947">
    <property type="protein sequence ID" value="DAA10389.1"/>
    <property type="molecule type" value="Genomic_DNA"/>
</dbReference>
<dbReference type="PIR" id="S60967">
    <property type="entry name" value="S60967"/>
</dbReference>
<dbReference type="RefSeq" id="NP_014239.1">
    <property type="nucleotide sequence ID" value="NM_001182998.1"/>
</dbReference>
<dbReference type="SMR" id="P38616"/>
<dbReference type="BioGRID" id="35669">
    <property type="interactions" value="98"/>
</dbReference>
<dbReference type="DIP" id="DIP-5199N"/>
<dbReference type="FunCoup" id="P38616">
    <property type="interactions" value="196"/>
</dbReference>
<dbReference type="IntAct" id="P38616">
    <property type="interactions" value="12"/>
</dbReference>
<dbReference type="STRING" id="4932.YNL160W"/>
<dbReference type="CarbonylDB" id="P38616"/>
<dbReference type="GlyCosmos" id="P38616">
    <property type="glycosylation" value="14 sites, No reported glycans"/>
</dbReference>
<dbReference type="GlyGen" id="P38616">
    <property type="glycosylation" value="14 sites"/>
</dbReference>
<dbReference type="iPTMnet" id="P38616"/>
<dbReference type="PaxDb" id="4932-YNL160W"/>
<dbReference type="PeptideAtlas" id="P38616"/>
<dbReference type="EnsemblFungi" id="YNL160W_mRNA">
    <property type="protein sequence ID" value="YNL160W"/>
    <property type="gene ID" value="YNL160W"/>
</dbReference>
<dbReference type="GeneID" id="855562"/>
<dbReference type="KEGG" id="sce:YNL160W"/>
<dbReference type="AGR" id="SGD:S000005104"/>
<dbReference type="SGD" id="S000005104">
    <property type="gene designation" value="YGP1"/>
</dbReference>
<dbReference type="VEuPathDB" id="FungiDB:YNL160W"/>
<dbReference type="eggNOG" id="KOG0503">
    <property type="taxonomic scope" value="Eukaryota"/>
</dbReference>
<dbReference type="GeneTree" id="ENSGT00940000176754"/>
<dbReference type="HOGENOM" id="CLU_046466_0_0_1"/>
<dbReference type="InParanoid" id="P38616"/>
<dbReference type="OMA" id="KWFFDAS"/>
<dbReference type="OrthoDB" id="4070114at2759"/>
<dbReference type="BioCyc" id="YEAST:G3O-33176-MONOMER"/>
<dbReference type="BioGRID-ORCS" id="855562">
    <property type="hits" value="0 hits in 10 CRISPR screens"/>
</dbReference>
<dbReference type="PRO" id="PR:P38616"/>
<dbReference type="Proteomes" id="UP000002311">
    <property type="component" value="Chromosome XIV"/>
</dbReference>
<dbReference type="RNAct" id="P38616">
    <property type="molecule type" value="protein"/>
</dbReference>
<dbReference type="GO" id="GO:0005576">
    <property type="term" value="C:extracellular region"/>
    <property type="evidence" value="ECO:0000314"/>
    <property type="project" value="SGD"/>
</dbReference>
<dbReference type="GO" id="GO:0070726">
    <property type="term" value="P:cell wall assembly"/>
    <property type="evidence" value="ECO:0000314"/>
    <property type="project" value="SGD"/>
</dbReference>
<dbReference type="InterPro" id="IPR036152">
    <property type="entry name" value="Asp/glu_Ase-like_sf"/>
</dbReference>
<dbReference type="InterPro" id="IPR006034">
    <property type="entry name" value="Asparaginase/glutaminase-like"/>
</dbReference>
<dbReference type="PIRSF" id="PIRSF001220">
    <property type="entry name" value="L-ASNase_gatD"/>
    <property type="match status" value="1"/>
</dbReference>
<dbReference type="PIRSF" id="PIRSF500176">
    <property type="entry name" value="L_ASNase"/>
    <property type="match status" value="1"/>
</dbReference>
<dbReference type="SMART" id="SM00870">
    <property type="entry name" value="Asparaginase"/>
    <property type="match status" value="1"/>
</dbReference>
<dbReference type="SUPFAM" id="SSF53774">
    <property type="entry name" value="Glutaminase/Asparaginase"/>
    <property type="match status" value="1"/>
</dbReference>
<dbReference type="PROSITE" id="PS51732">
    <property type="entry name" value="ASN_GLN_ASE_3"/>
    <property type="match status" value="1"/>
</dbReference>
<comment type="function">
    <text>May be involved in cellular adaptations prior to stationary phase.</text>
</comment>
<comment type="subcellular location">
    <subcellularLocation>
        <location evidence="3 4">Secreted</location>
    </subcellularLocation>
</comment>
<comment type="induction">
    <text evidence="5">In response to nutrient limitation. Repressed by high glucose concentrations.</text>
</comment>
<comment type="PTM">
    <text evidence="4">Extensively N-glycosylated.</text>
</comment>
<comment type="similarity">
    <text evidence="6">To yeast sporulation-specific protein SPS100.</text>
</comment>
<reference key="1">
    <citation type="journal article" date="1994" name="Mol. Cell. Biol.">
        <title>Identification and characterization of a novel yeast gene: the YGP1 gene product is a highly glycosylated secreted protein that is synthesized in response to nutrient limitation.</title>
        <authorList>
            <person name="Destruelle M."/>
            <person name="Holzer H."/>
            <person name="Klionsky D.J."/>
        </authorList>
    </citation>
    <scope>NUCLEOTIDE SEQUENCE [GENOMIC DNA]</scope>
    <scope>PROTEIN SEQUENCE OF 38-57; 186-216; 319-330 AND 347-353</scope>
    <scope>INDUCTION</scope>
</reference>
<reference key="2">
    <citation type="journal article" date="1996" name="Yeast">
        <title>The sequence of 36.8 kb from the left arm of chromosome XIV reveals 24 complete open reading frames: 18 correspond to new genes, one of which encodes a protein similar to the human myotonic dystrophy kinase.</title>
        <authorList>
            <person name="Nasr F."/>
            <person name="Becam A.-M."/>
            <person name="Herbert C.J."/>
        </authorList>
    </citation>
    <scope>NUCLEOTIDE SEQUENCE [GENOMIC DNA]</scope>
    <source>
        <strain>ATCC 96604 / S288c / FY1679</strain>
    </source>
</reference>
<reference key="3">
    <citation type="journal article" date="1997" name="Nature">
        <title>The nucleotide sequence of Saccharomyces cerevisiae chromosome XIV and its evolutionary implications.</title>
        <authorList>
            <person name="Philippsen P."/>
            <person name="Kleine K."/>
            <person name="Poehlmann R."/>
            <person name="Duesterhoeft A."/>
            <person name="Hamberg K."/>
            <person name="Hegemann J.H."/>
            <person name="Obermaier B."/>
            <person name="Urrestarazu L.A."/>
            <person name="Aert R."/>
            <person name="Albermann K."/>
            <person name="Altmann R."/>
            <person name="Andre B."/>
            <person name="Baladron V."/>
            <person name="Ballesta J.P.G."/>
            <person name="Becam A.-M."/>
            <person name="Beinhauer J.D."/>
            <person name="Boskovic J."/>
            <person name="Buitrago M.J."/>
            <person name="Bussereau F."/>
            <person name="Coster F."/>
            <person name="Crouzet M."/>
            <person name="D'Angelo M."/>
            <person name="Dal Pero F."/>
            <person name="De Antoni A."/>
            <person name="del Rey F."/>
            <person name="Doignon F."/>
            <person name="Domdey H."/>
            <person name="Dubois E."/>
            <person name="Fiedler T.A."/>
            <person name="Fleig U."/>
            <person name="Floeth M."/>
            <person name="Fritz C."/>
            <person name="Gaillardin C."/>
            <person name="Garcia-Cantalejo J.M."/>
            <person name="Glansdorff N."/>
            <person name="Goffeau A."/>
            <person name="Gueldener U."/>
            <person name="Herbert C.J."/>
            <person name="Heumann K."/>
            <person name="Heuss-Neitzel D."/>
            <person name="Hilbert H."/>
            <person name="Hinni K."/>
            <person name="Iraqui Houssaini I."/>
            <person name="Jacquet M."/>
            <person name="Jimenez A."/>
            <person name="Jonniaux J.-L."/>
            <person name="Karpfinger-Hartl L."/>
            <person name="Lanfranchi G."/>
            <person name="Lepingle A."/>
            <person name="Levesque H."/>
            <person name="Lyck R."/>
            <person name="Maftahi M."/>
            <person name="Mallet L."/>
            <person name="Maurer C.T.C."/>
            <person name="Messenguy F."/>
            <person name="Mewes H.-W."/>
            <person name="Moestl D."/>
            <person name="Nasr F."/>
            <person name="Nicaud J.-M."/>
            <person name="Niedenthal R.K."/>
            <person name="Pandolfo D."/>
            <person name="Pierard A."/>
            <person name="Piravandi E."/>
            <person name="Planta R.J."/>
            <person name="Pohl T.M."/>
            <person name="Purnelle B."/>
            <person name="Rebischung C."/>
            <person name="Remacha M.A."/>
            <person name="Revuelta J.L."/>
            <person name="Rinke M."/>
            <person name="Saiz J.E."/>
            <person name="Sartorello F."/>
            <person name="Scherens B."/>
            <person name="Sen-Gupta M."/>
            <person name="Soler-Mira A."/>
            <person name="Urbanus J.H.M."/>
            <person name="Valle G."/>
            <person name="Van Dyck L."/>
            <person name="Verhasselt P."/>
            <person name="Vierendeels F."/>
            <person name="Vissers S."/>
            <person name="Voet M."/>
            <person name="Volckaert G."/>
            <person name="Wach A."/>
            <person name="Wambutt R."/>
            <person name="Wedler H."/>
            <person name="Zollner A."/>
            <person name="Hani J."/>
        </authorList>
    </citation>
    <scope>NUCLEOTIDE SEQUENCE [LARGE SCALE GENOMIC DNA]</scope>
    <source>
        <strain>ATCC 204508 / S288c</strain>
    </source>
</reference>
<reference key="4">
    <citation type="journal article" date="2014" name="G3 (Bethesda)">
        <title>The reference genome sequence of Saccharomyces cerevisiae: Then and now.</title>
        <authorList>
            <person name="Engel S.R."/>
            <person name="Dietrich F.S."/>
            <person name="Fisk D.G."/>
            <person name="Binkley G."/>
            <person name="Balakrishnan R."/>
            <person name="Costanzo M.C."/>
            <person name="Dwight S.S."/>
            <person name="Hitz B.C."/>
            <person name="Karra K."/>
            <person name="Nash R.S."/>
            <person name="Weng S."/>
            <person name="Wong E.D."/>
            <person name="Lloyd P."/>
            <person name="Skrzypek M.S."/>
            <person name="Miyasato S.R."/>
            <person name="Simison M."/>
            <person name="Cherry J.M."/>
        </authorList>
    </citation>
    <scope>GENOME REANNOTATION</scope>
    <source>
        <strain>ATCC 204508 / S288c</strain>
    </source>
</reference>
<reference key="5">
    <citation type="journal article" date="1999" name="Yeast">
        <title>Two-dimensional analysis of proteins secreted by Saccharomyces cerevisiae regenerating protoplasts: a novel approach to study the cell wall.</title>
        <authorList>
            <person name="Pardo M."/>
            <person name="Monteoliva L."/>
            <person name="Pla J."/>
            <person name="Sanchez M."/>
            <person name="Gil C."/>
            <person name="Nombela C."/>
        </authorList>
    </citation>
    <scope>PROTEIN SEQUENCE OF 145-156</scope>
    <scope>SUBCELLULAR LOCATION</scope>
</reference>
<reference key="6">
    <citation type="journal article" date="2008" name="J. Virol.">
        <title>An engineered Saccharomyces cerevisiae strain binds the broadly neutralizing human immunodeficiency virus type 1 antibody 2G12 and elicits mannose-specific gp120-binding antibodies.</title>
        <authorList>
            <person name="Luallen R.J."/>
            <person name="Lin J."/>
            <person name="Fu H."/>
            <person name="Cai K.K."/>
            <person name="Agrawal C."/>
            <person name="Mboudjeka I."/>
            <person name="Lee F.-H."/>
            <person name="Montefiori D."/>
            <person name="Smith D.F."/>
            <person name="Doms R.W."/>
            <person name="Geng Y."/>
        </authorList>
    </citation>
    <scope>SUBCELLULAR LOCATION</scope>
    <scope>GLYCOSYLATION</scope>
    <scope>IDENTIFICATION BY MASS SPECTROMETRY</scope>
</reference>
<sequence length="354" mass="37328">MKFQVVLSALLACSSAVVASPIENLFKYRAVKASHSKNINSTLPAWNGSNSSNVTYANGTNSTTNTTTAESSQLQIIVTGGQVPITNSSLTHTNYTRLFNSSSALNITELYNVARVVNETIQDKSSAGAVVVANAKSLEAVSFFFSIIFDTEKPIVVTEDSAYAIPVANNKNATKRGVLSVTSDKLVYSGVFTPPTACSYGAGLPVAIVDDQDEVKWFFDASKPTLISSDSIIRKEYSNFTTPYGLLENGVPIVPIVYDGGYSSSLIDSLSSAVQGLVVVSSGSTNSTSSTIESTEIPVVYAQANTPLNFIDNKDVPKNAVGAGYLSPIKAQILLSIAAVNGVTSKSALESIFP</sequence>